<gene>
    <name evidence="1" type="primary">gatA</name>
    <name type="ordered locus">CAB286</name>
</gene>
<dbReference type="EC" id="6.3.5.7" evidence="1"/>
<dbReference type="EMBL" id="CR848038">
    <property type="protein sequence ID" value="CAH63736.1"/>
    <property type="molecule type" value="Genomic_DNA"/>
</dbReference>
<dbReference type="RefSeq" id="WP_011096957.1">
    <property type="nucleotide sequence ID" value="NC_004552.2"/>
</dbReference>
<dbReference type="SMR" id="Q5L6I9"/>
<dbReference type="KEGG" id="cab:CAB286"/>
<dbReference type="eggNOG" id="COG0154">
    <property type="taxonomic scope" value="Bacteria"/>
</dbReference>
<dbReference type="HOGENOM" id="CLU_009600_0_3_0"/>
<dbReference type="OrthoDB" id="9811471at2"/>
<dbReference type="Proteomes" id="UP000001012">
    <property type="component" value="Chromosome"/>
</dbReference>
<dbReference type="GO" id="GO:0030956">
    <property type="term" value="C:glutamyl-tRNA(Gln) amidotransferase complex"/>
    <property type="evidence" value="ECO:0007669"/>
    <property type="project" value="InterPro"/>
</dbReference>
<dbReference type="GO" id="GO:0005524">
    <property type="term" value="F:ATP binding"/>
    <property type="evidence" value="ECO:0007669"/>
    <property type="project" value="UniProtKB-KW"/>
</dbReference>
<dbReference type="GO" id="GO:0050567">
    <property type="term" value="F:glutaminyl-tRNA synthase (glutamine-hydrolyzing) activity"/>
    <property type="evidence" value="ECO:0007669"/>
    <property type="project" value="UniProtKB-UniRule"/>
</dbReference>
<dbReference type="GO" id="GO:0006412">
    <property type="term" value="P:translation"/>
    <property type="evidence" value="ECO:0007669"/>
    <property type="project" value="UniProtKB-UniRule"/>
</dbReference>
<dbReference type="Gene3D" id="3.90.1300.10">
    <property type="entry name" value="Amidase signature (AS) domain"/>
    <property type="match status" value="1"/>
</dbReference>
<dbReference type="HAMAP" id="MF_00120">
    <property type="entry name" value="GatA"/>
    <property type="match status" value="1"/>
</dbReference>
<dbReference type="InterPro" id="IPR000120">
    <property type="entry name" value="Amidase"/>
</dbReference>
<dbReference type="InterPro" id="IPR020556">
    <property type="entry name" value="Amidase_CS"/>
</dbReference>
<dbReference type="InterPro" id="IPR023631">
    <property type="entry name" value="Amidase_dom"/>
</dbReference>
<dbReference type="InterPro" id="IPR036928">
    <property type="entry name" value="AS_sf"/>
</dbReference>
<dbReference type="InterPro" id="IPR004412">
    <property type="entry name" value="GatA"/>
</dbReference>
<dbReference type="NCBIfam" id="TIGR00132">
    <property type="entry name" value="gatA"/>
    <property type="match status" value="1"/>
</dbReference>
<dbReference type="PANTHER" id="PTHR11895:SF151">
    <property type="entry name" value="GLUTAMYL-TRNA(GLN) AMIDOTRANSFERASE SUBUNIT A"/>
    <property type="match status" value="1"/>
</dbReference>
<dbReference type="PANTHER" id="PTHR11895">
    <property type="entry name" value="TRANSAMIDASE"/>
    <property type="match status" value="1"/>
</dbReference>
<dbReference type="Pfam" id="PF01425">
    <property type="entry name" value="Amidase"/>
    <property type="match status" value="1"/>
</dbReference>
<dbReference type="SUPFAM" id="SSF75304">
    <property type="entry name" value="Amidase signature (AS) enzymes"/>
    <property type="match status" value="1"/>
</dbReference>
<dbReference type="PROSITE" id="PS00571">
    <property type="entry name" value="AMIDASES"/>
    <property type="match status" value="1"/>
</dbReference>
<proteinExistence type="inferred from homology"/>
<sequence length="491" mass="53064">MYQKSALELRNAVVSGESSATAIAKYFYNRIKTEDNQIGAFLSLCEERAYEKAAIIDAKVARGEPLGKLAGVPIGIKDNIHIRGLRTTCASKMLENYIAPFDATVVERIEAEDGVILGKLNMDEFAMGSTTQYSAFHPTKNPWGLSCVPGGSSGGSAAAVSARFCPIALGSDTGGSIRQPAAFCGVVGFKPSYGAVSRYGLVAFGSSLDQIGPLTTVVEDVALAMDVFAGKDDRDATSQKFFTGSFQEALSLDVPSLIGVPMGFLDGLRDDVKENFFASLSILERQGSRIVEVDLNILDHAVSVYYIVASAEAATNLARFDGIRYGYRSPEAHSIEDIYTISRVQGFGKEVMRRILLGNYVLSTERQNVYYKKGSAIRAKIIQAFQKAYEKCDVIAMPVCSCPAFADGEILDPTSLYLQDIYTVAMNLAYLPAIAVPSGFSREGLPLGFQVIGQKGKDQQVCQVGYSFQEHSGIKNLYPKGCNKLVDGEVK</sequence>
<name>GATA_CHLAB</name>
<feature type="chain" id="PRO_0000241086" description="Glutamyl-tRNA(Gln) amidotransferase subunit A">
    <location>
        <begin position="1"/>
        <end position="491"/>
    </location>
</feature>
<feature type="active site" description="Charge relay system" evidence="1">
    <location>
        <position position="77"/>
    </location>
</feature>
<feature type="active site" description="Charge relay system" evidence="1">
    <location>
        <position position="152"/>
    </location>
</feature>
<feature type="active site" description="Acyl-ester intermediate" evidence="1">
    <location>
        <position position="176"/>
    </location>
</feature>
<accession>Q5L6I9</accession>
<protein>
    <recommendedName>
        <fullName evidence="1">Glutamyl-tRNA(Gln) amidotransferase subunit A</fullName>
        <shortName evidence="1">Glu-ADT subunit A</shortName>
        <ecNumber evidence="1">6.3.5.7</ecNumber>
    </recommendedName>
</protein>
<organism>
    <name type="scientific">Chlamydia abortus (strain DSM 27085 / S26/3)</name>
    <name type="common">Chlamydophila abortus</name>
    <dbReference type="NCBI Taxonomy" id="218497"/>
    <lineage>
        <taxon>Bacteria</taxon>
        <taxon>Pseudomonadati</taxon>
        <taxon>Chlamydiota</taxon>
        <taxon>Chlamydiia</taxon>
        <taxon>Chlamydiales</taxon>
        <taxon>Chlamydiaceae</taxon>
        <taxon>Chlamydia/Chlamydophila group</taxon>
        <taxon>Chlamydia</taxon>
    </lineage>
</organism>
<reference key="1">
    <citation type="journal article" date="2005" name="Genome Res.">
        <title>The Chlamydophila abortus genome sequence reveals an array of variable proteins that contribute to interspecies variation.</title>
        <authorList>
            <person name="Thomson N.R."/>
            <person name="Yeats C."/>
            <person name="Bell K."/>
            <person name="Holden M.T.G."/>
            <person name="Bentley S.D."/>
            <person name="Livingstone M."/>
            <person name="Cerdeno-Tarraga A.-M."/>
            <person name="Harris B."/>
            <person name="Doggett J."/>
            <person name="Ormond D."/>
            <person name="Mungall K."/>
            <person name="Clarke K."/>
            <person name="Feltwell T."/>
            <person name="Hance Z."/>
            <person name="Sanders M."/>
            <person name="Quail M.A."/>
            <person name="Price C."/>
            <person name="Barrell B.G."/>
            <person name="Parkhill J."/>
            <person name="Longbottom D."/>
        </authorList>
    </citation>
    <scope>NUCLEOTIDE SEQUENCE [LARGE SCALE GENOMIC DNA]</scope>
    <source>
        <strain>DSM 27085 / S26/3</strain>
    </source>
</reference>
<evidence type="ECO:0000255" key="1">
    <source>
        <dbReference type="HAMAP-Rule" id="MF_00120"/>
    </source>
</evidence>
<keyword id="KW-0067">ATP-binding</keyword>
<keyword id="KW-0436">Ligase</keyword>
<keyword id="KW-0547">Nucleotide-binding</keyword>
<keyword id="KW-0648">Protein biosynthesis</keyword>
<comment type="function">
    <text evidence="1">Allows the formation of correctly charged Gln-tRNA(Gln) through the transamidation of misacylated Glu-tRNA(Gln) in organisms which lack glutaminyl-tRNA synthetase. The reaction takes place in the presence of glutamine and ATP through an activated gamma-phospho-Glu-tRNA(Gln).</text>
</comment>
<comment type="catalytic activity">
    <reaction evidence="1">
        <text>L-glutamyl-tRNA(Gln) + L-glutamine + ATP + H2O = L-glutaminyl-tRNA(Gln) + L-glutamate + ADP + phosphate + H(+)</text>
        <dbReference type="Rhea" id="RHEA:17521"/>
        <dbReference type="Rhea" id="RHEA-COMP:9681"/>
        <dbReference type="Rhea" id="RHEA-COMP:9684"/>
        <dbReference type="ChEBI" id="CHEBI:15377"/>
        <dbReference type="ChEBI" id="CHEBI:15378"/>
        <dbReference type="ChEBI" id="CHEBI:29985"/>
        <dbReference type="ChEBI" id="CHEBI:30616"/>
        <dbReference type="ChEBI" id="CHEBI:43474"/>
        <dbReference type="ChEBI" id="CHEBI:58359"/>
        <dbReference type="ChEBI" id="CHEBI:78520"/>
        <dbReference type="ChEBI" id="CHEBI:78521"/>
        <dbReference type="ChEBI" id="CHEBI:456216"/>
        <dbReference type="EC" id="6.3.5.7"/>
    </reaction>
</comment>
<comment type="subunit">
    <text evidence="1">Heterotrimer of A, B and C subunits.</text>
</comment>
<comment type="similarity">
    <text evidence="1">Belongs to the amidase family. GatA subfamily.</text>
</comment>